<protein>
    <recommendedName>
        <fullName evidence="1">Riboflavin kinase</fullName>
        <shortName evidence="1">RFK</shortName>
        <ecNumber evidence="1">2.7.1.161</ecNumber>
    </recommendedName>
    <alternativeName>
        <fullName evidence="1">CTP-dependent riboflavin kinase</fullName>
    </alternativeName>
    <alternativeName>
        <fullName evidence="1">CTP:riboflavin 5'-phosphotransferase</fullName>
    </alternativeName>
    <alternativeName>
        <fullName evidence="1">Flavokinase</fullName>
    </alternativeName>
</protein>
<reference key="1">
    <citation type="journal article" date="2004" name="J. Bacteriol.">
        <title>Complete genome sequence of the genetically tractable hydrogenotrophic methanogen Methanococcus maripaludis.</title>
        <authorList>
            <person name="Hendrickson E.L."/>
            <person name="Kaul R."/>
            <person name="Zhou Y."/>
            <person name="Bovee D."/>
            <person name="Chapman P."/>
            <person name="Chung J."/>
            <person name="Conway de Macario E."/>
            <person name="Dodsworth J.A."/>
            <person name="Gillett W."/>
            <person name="Graham D.E."/>
            <person name="Hackett M."/>
            <person name="Haydock A.K."/>
            <person name="Kang A."/>
            <person name="Land M.L."/>
            <person name="Levy R."/>
            <person name="Lie T.J."/>
            <person name="Major T.A."/>
            <person name="Moore B.C."/>
            <person name="Porat I."/>
            <person name="Palmeiri A."/>
            <person name="Rouse G."/>
            <person name="Saenphimmachak C."/>
            <person name="Soell D."/>
            <person name="Van Dien S."/>
            <person name="Wang T."/>
            <person name="Whitman W.B."/>
            <person name="Xia Q."/>
            <person name="Zhang Y."/>
            <person name="Larimer F.W."/>
            <person name="Olson M.V."/>
            <person name="Leigh J.A."/>
        </authorList>
    </citation>
    <scope>NUCLEOTIDE SEQUENCE [LARGE SCALE GENOMIC DNA]</scope>
    <source>
        <strain>DSM 14266 / JCM 13030 / NBRC 101832 / S2 / LL</strain>
    </source>
</reference>
<sequence>MEIFGHVVSGLGEGKFFVGLTHYKNKFEELTGFTPFEGTLNVKLKHNFNLDEFNPIEFDGFEIDGKKYFGGKVLLIKLFNKQGNSINCAVVAPKKTDHSKKTLEIIAPIQLRKFLLLKNSDVVKLVI</sequence>
<feature type="chain" id="PRO_0000322071" description="Riboflavin kinase">
    <location>
        <begin position="1"/>
        <end position="127"/>
    </location>
</feature>
<feature type="binding site" evidence="1">
    <location>
        <begin position="10"/>
        <end position="15"/>
    </location>
    <ligand>
        <name>CDP</name>
        <dbReference type="ChEBI" id="CHEBI:58069"/>
    </ligand>
</feature>
<feature type="binding site" evidence="1">
    <location>
        <position position="39"/>
    </location>
    <ligand>
        <name>Mg(2+)</name>
        <dbReference type="ChEBI" id="CHEBI:18420"/>
    </ligand>
</feature>
<feature type="binding site" evidence="1">
    <location>
        <position position="41"/>
    </location>
    <ligand>
        <name>Mg(2+)</name>
        <dbReference type="ChEBI" id="CHEBI:18420"/>
    </ligand>
</feature>
<feature type="binding site" evidence="1">
    <location>
        <position position="96"/>
    </location>
    <ligand>
        <name>FMN</name>
        <dbReference type="ChEBI" id="CHEBI:58210"/>
    </ligand>
</feature>
<feature type="binding site" evidence="1">
    <location>
        <position position="104"/>
    </location>
    <ligand>
        <name>FMN</name>
        <dbReference type="ChEBI" id="CHEBI:58210"/>
    </ligand>
</feature>
<feature type="binding site" evidence="1">
    <location>
        <begin position="109"/>
        <end position="112"/>
    </location>
    <ligand>
        <name>CDP</name>
        <dbReference type="ChEBI" id="CHEBI:58069"/>
    </ligand>
</feature>
<gene>
    <name evidence="1" type="primary">ribK</name>
    <name type="ordered locus">MMP0184</name>
</gene>
<comment type="function">
    <text evidence="1">Catalyzes the CTP-dependent phosphorylation of riboflavin (vitamin B2) to form flavin mononucleotide (FMN).</text>
</comment>
<comment type="catalytic activity">
    <reaction evidence="1">
        <text>riboflavin + CTP = CDP + FMN + H(+)</text>
        <dbReference type="Rhea" id="RHEA:25021"/>
        <dbReference type="ChEBI" id="CHEBI:15378"/>
        <dbReference type="ChEBI" id="CHEBI:37563"/>
        <dbReference type="ChEBI" id="CHEBI:57986"/>
        <dbReference type="ChEBI" id="CHEBI:58069"/>
        <dbReference type="ChEBI" id="CHEBI:58210"/>
        <dbReference type="EC" id="2.7.1.161"/>
    </reaction>
</comment>
<comment type="cofactor">
    <cofactor evidence="1">
        <name>Mg(2+)</name>
        <dbReference type="ChEBI" id="CHEBI:18420"/>
    </cofactor>
    <text evidence="1">Binds 1 Mg(2+) ion per subunit.</text>
</comment>
<comment type="pathway">
    <text evidence="1">Cofactor biosynthesis; FMN biosynthesis; FMN from riboflavin (CTP route): step 1/1.</text>
</comment>
<comment type="similarity">
    <text evidence="1">Belongs to the archaeal riboflavin kinase family.</text>
</comment>
<organism>
    <name type="scientific">Methanococcus maripaludis (strain DSM 14266 / JCM 13030 / NBRC 101832 / S2 / LL)</name>
    <dbReference type="NCBI Taxonomy" id="267377"/>
    <lineage>
        <taxon>Archaea</taxon>
        <taxon>Methanobacteriati</taxon>
        <taxon>Methanobacteriota</taxon>
        <taxon>Methanomada group</taxon>
        <taxon>Methanococci</taxon>
        <taxon>Methanococcales</taxon>
        <taxon>Methanococcaceae</taxon>
        <taxon>Methanococcus</taxon>
    </lineage>
</organism>
<accession>Q6M0T4</accession>
<keyword id="KW-0285">Flavoprotein</keyword>
<keyword id="KW-0288">FMN</keyword>
<keyword id="KW-0418">Kinase</keyword>
<keyword id="KW-0460">Magnesium</keyword>
<keyword id="KW-0479">Metal-binding</keyword>
<keyword id="KW-0547">Nucleotide-binding</keyword>
<keyword id="KW-1185">Reference proteome</keyword>
<keyword id="KW-0808">Transferase</keyword>
<dbReference type="EC" id="2.7.1.161" evidence="1"/>
<dbReference type="EMBL" id="BX950229">
    <property type="protein sequence ID" value="CAF29740.1"/>
    <property type="molecule type" value="Genomic_DNA"/>
</dbReference>
<dbReference type="RefSeq" id="WP_011170128.1">
    <property type="nucleotide sequence ID" value="NC_005791.1"/>
</dbReference>
<dbReference type="SMR" id="Q6M0T4"/>
<dbReference type="STRING" id="267377.MMP0184"/>
<dbReference type="EnsemblBacteria" id="CAF29740">
    <property type="protein sequence ID" value="CAF29740"/>
    <property type="gene ID" value="MMP0184"/>
</dbReference>
<dbReference type="GeneID" id="2761170"/>
<dbReference type="KEGG" id="mmp:MMP0184"/>
<dbReference type="PATRIC" id="fig|267377.15.peg.188"/>
<dbReference type="eggNOG" id="arCOG01904">
    <property type="taxonomic scope" value="Archaea"/>
</dbReference>
<dbReference type="HOGENOM" id="CLU_140165_0_0_2"/>
<dbReference type="OrthoDB" id="30955at2157"/>
<dbReference type="UniPathway" id="UPA00276">
    <property type="reaction ID" value="UER00929"/>
</dbReference>
<dbReference type="Proteomes" id="UP000000590">
    <property type="component" value="Chromosome"/>
</dbReference>
<dbReference type="GO" id="GO:0000287">
    <property type="term" value="F:magnesium ion binding"/>
    <property type="evidence" value="ECO:0007669"/>
    <property type="project" value="UniProtKB-UniRule"/>
</dbReference>
<dbReference type="GO" id="GO:0000166">
    <property type="term" value="F:nucleotide binding"/>
    <property type="evidence" value="ECO:0007669"/>
    <property type="project" value="UniProtKB-UniRule"/>
</dbReference>
<dbReference type="GO" id="GO:0008531">
    <property type="term" value="F:riboflavin kinase activity"/>
    <property type="evidence" value="ECO:0007669"/>
    <property type="project" value="InterPro"/>
</dbReference>
<dbReference type="GO" id="GO:0009398">
    <property type="term" value="P:FMN biosynthetic process"/>
    <property type="evidence" value="ECO:0007669"/>
    <property type="project" value="UniProtKB-UniRule"/>
</dbReference>
<dbReference type="GO" id="GO:0009231">
    <property type="term" value="P:riboflavin biosynthetic process"/>
    <property type="evidence" value="ECO:0007669"/>
    <property type="project" value="InterPro"/>
</dbReference>
<dbReference type="Gene3D" id="2.40.30.30">
    <property type="entry name" value="Riboflavin kinase-like"/>
    <property type="match status" value="1"/>
</dbReference>
<dbReference type="HAMAP" id="MF_01285">
    <property type="entry name" value="Riboflavin_kinase"/>
    <property type="match status" value="1"/>
</dbReference>
<dbReference type="InterPro" id="IPR053397">
    <property type="entry name" value="Archaeal_Riboflavin_Kinase"/>
</dbReference>
<dbReference type="InterPro" id="IPR039063">
    <property type="entry name" value="RibK_CTP-dep"/>
</dbReference>
<dbReference type="InterPro" id="IPR023470">
    <property type="entry name" value="Riboflavin_kinase_archaeal"/>
</dbReference>
<dbReference type="InterPro" id="IPR023602">
    <property type="entry name" value="Riboflavin_kinase_CTP-dep"/>
</dbReference>
<dbReference type="InterPro" id="IPR023465">
    <property type="entry name" value="Riboflavin_kinase_dom_sf"/>
</dbReference>
<dbReference type="NCBIfam" id="NF040694">
    <property type="entry name" value="ribK_Meth"/>
    <property type="match status" value="1"/>
</dbReference>
<dbReference type="PANTHER" id="PTHR40706">
    <property type="entry name" value="RIBOFLAVIN KINASE"/>
    <property type="match status" value="1"/>
</dbReference>
<dbReference type="PANTHER" id="PTHR40706:SF1">
    <property type="entry name" value="RIBOFLAVIN KINASE"/>
    <property type="match status" value="1"/>
</dbReference>
<dbReference type="Pfam" id="PF01982">
    <property type="entry name" value="CTP-dep_RFKase"/>
    <property type="match status" value="1"/>
</dbReference>
<dbReference type="SUPFAM" id="SSF82114">
    <property type="entry name" value="Riboflavin kinase-like"/>
    <property type="match status" value="1"/>
</dbReference>
<name>RIFK_METMP</name>
<evidence type="ECO:0000255" key="1">
    <source>
        <dbReference type="HAMAP-Rule" id="MF_01285"/>
    </source>
</evidence>
<proteinExistence type="inferred from homology"/>